<dbReference type="EC" id="2.7.7.6" evidence="1"/>
<dbReference type="EMBL" id="FJ515668">
    <property type="protein sequence ID" value="ACL36491.1"/>
    <property type="molecule type" value="Genomic_DNA"/>
</dbReference>
<dbReference type="EMBL" id="CP077717">
    <property type="protein sequence ID" value="QXJ27312.1"/>
    <property type="molecule type" value="Genomic_DNA"/>
</dbReference>
<dbReference type="PDB" id="2WAQ">
    <property type="method" value="X-ray"/>
    <property type="resolution" value="3.35 A"/>
    <property type="chains" value="D=1-265"/>
</dbReference>
<dbReference type="PDB" id="2WB1">
    <property type="method" value="X-ray"/>
    <property type="resolution" value="3.52 A"/>
    <property type="chains" value="D/S=1-265"/>
</dbReference>
<dbReference type="PDB" id="2Y0S">
    <property type="method" value="X-ray"/>
    <property type="resolution" value="3.80 A"/>
    <property type="chains" value="D/S=1-265"/>
</dbReference>
<dbReference type="PDB" id="4AYB">
    <property type="method" value="X-ray"/>
    <property type="resolution" value="3.20 A"/>
    <property type="chains" value="D=1-265"/>
</dbReference>
<dbReference type="PDB" id="4V8S">
    <property type="method" value="X-ray"/>
    <property type="resolution" value="4.32 A"/>
    <property type="chains" value="AS/BD=1-265"/>
</dbReference>
<dbReference type="PDBsum" id="2WAQ"/>
<dbReference type="PDBsum" id="2WB1"/>
<dbReference type="PDBsum" id="2Y0S"/>
<dbReference type="PDBsum" id="4AYB"/>
<dbReference type="PDBsum" id="4V8S"/>
<dbReference type="SMR" id="B8YB56"/>
<dbReference type="KEGG" id="sshi:J5U23_00176"/>
<dbReference type="OrthoDB" id="84933at2157"/>
<dbReference type="BRENDA" id="2.7.7.6">
    <property type="organism ID" value="6162"/>
</dbReference>
<dbReference type="EvolutionaryTrace" id="B8YB56"/>
<dbReference type="Proteomes" id="UP000694018">
    <property type="component" value="Chromosome"/>
</dbReference>
<dbReference type="GO" id="GO:0005737">
    <property type="term" value="C:cytoplasm"/>
    <property type="evidence" value="ECO:0007669"/>
    <property type="project" value="UniProtKB-SubCell"/>
</dbReference>
<dbReference type="GO" id="GO:0000428">
    <property type="term" value="C:DNA-directed RNA polymerase complex"/>
    <property type="evidence" value="ECO:0000314"/>
    <property type="project" value="UniProtKB"/>
</dbReference>
<dbReference type="GO" id="GO:0051538">
    <property type="term" value="F:3 iron, 4 sulfur cluster binding"/>
    <property type="evidence" value="ECO:0007669"/>
    <property type="project" value="UniProtKB-KW"/>
</dbReference>
<dbReference type="GO" id="GO:0003677">
    <property type="term" value="F:DNA binding"/>
    <property type="evidence" value="ECO:0007669"/>
    <property type="project" value="UniProtKB-UniRule"/>
</dbReference>
<dbReference type="GO" id="GO:0003899">
    <property type="term" value="F:DNA-directed RNA polymerase activity"/>
    <property type="evidence" value="ECO:0007669"/>
    <property type="project" value="UniProtKB-UniRule"/>
</dbReference>
<dbReference type="GO" id="GO:0046872">
    <property type="term" value="F:metal ion binding"/>
    <property type="evidence" value="ECO:0007669"/>
    <property type="project" value="UniProtKB-KW"/>
</dbReference>
<dbReference type="GO" id="GO:0046983">
    <property type="term" value="F:protein dimerization activity"/>
    <property type="evidence" value="ECO:0007669"/>
    <property type="project" value="InterPro"/>
</dbReference>
<dbReference type="GO" id="GO:0006351">
    <property type="term" value="P:DNA-templated transcription"/>
    <property type="evidence" value="ECO:0007669"/>
    <property type="project" value="UniProtKB-UniRule"/>
</dbReference>
<dbReference type="CDD" id="cd07030">
    <property type="entry name" value="RNAP_D"/>
    <property type="match status" value="1"/>
</dbReference>
<dbReference type="Gene3D" id="3.30.70.20">
    <property type="match status" value="1"/>
</dbReference>
<dbReference type="Gene3D" id="2.170.120.12">
    <property type="entry name" value="DNA-directed RNA polymerase, insert domain"/>
    <property type="match status" value="1"/>
</dbReference>
<dbReference type="Gene3D" id="3.30.1360.10">
    <property type="entry name" value="RNA polymerase, RBP11-like subunit"/>
    <property type="match status" value="1"/>
</dbReference>
<dbReference type="HAMAP" id="MF_00320">
    <property type="entry name" value="RNApol_arch_Rpo3"/>
    <property type="match status" value="1"/>
</dbReference>
<dbReference type="InterPro" id="IPR001514">
    <property type="entry name" value="DNA-dir_RNA_pol_30-40kDasu_CS"/>
</dbReference>
<dbReference type="InterPro" id="IPR011262">
    <property type="entry name" value="DNA-dir_RNA_pol_insert"/>
</dbReference>
<dbReference type="InterPro" id="IPR011263">
    <property type="entry name" value="DNA-dir_RNA_pol_RpoA/D/Rpb3"/>
</dbReference>
<dbReference type="InterPro" id="IPR036603">
    <property type="entry name" value="RBP11-like"/>
</dbReference>
<dbReference type="InterPro" id="IPR022842">
    <property type="entry name" value="RNAP_Rpo3/Rpb3/RPAC1"/>
</dbReference>
<dbReference type="InterPro" id="IPR036643">
    <property type="entry name" value="RNApol_insert_sf"/>
</dbReference>
<dbReference type="InterPro" id="IPR050518">
    <property type="entry name" value="Rpo3/RPB3_RNA_Pol_subunit"/>
</dbReference>
<dbReference type="NCBIfam" id="NF001988">
    <property type="entry name" value="PRK00783.1"/>
    <property type="match status" value="1"/>
</dbReference>
<dbReference type="PANTHER" id="PTHR11800">
    <property type="entry name" value="DNA-DIRECTED RNA POLYMERASE"/>
    <property type="match status" value="1"/>
</dbReference>
<dbReference type="PANTHER" id="PTHR11800:SF2">
    <property type="entry name" value="DNA-DIRECTED RNA POLYMERASE II SUBUNIT RPB3"/>
    <property type="match status" value="1"/>
</dbReference>
<dbReference type="Pfam" id="PF01000">
    <property type="entry name" value="RNA_pol_A_bac"/>
    <property type="match status" value="1"/>
</dbReference>
<dbReference type="Pfam" id="PF01193">
    <property type="entry name" value="RNA_pol_L"/>
    <property type="match status" value="1"/>
</dbReference>
<dbReference type="SMART" id="SM00662">
    <property type="entry name" value="RPOLD"/>
    <property type="match status" value="1"/>
</dbReference>
<dbReference type="SUPFAM" id="SSF56553">
    <property type="entry name" value="Insert subdomain of RNA polymerase alpha subunit"/>
    <property type="match status" value="1"/>
</dbReference>
<dbReference type="SUPFAM" id="SSF55257">
    <property type="entry name" value="RBP11-like subunits of RNA polymerase"/>
    <property type="match status" value="1"/>
</dbReference>
<dbReference type="PROSITE" id="PS00446">
    <property type="entry name" value="RNA_POL_D_30KD"/>
    <property type="match status" value="1"/>
</dbReference>
<gene>
    <name evidence="1 5" type="primary">rpo3</name>
    <name evidence="1" type="synonym">rpoD</name>
    <name evidence="7" type="ORF">J5U23_00176</name>
</gene>
<accession>B8YB56</accession>
<accession>A0A8F5BL81</accession>
<keyword id="KW-0002">3D-structure</keyword>
<keyword id="KW-0003">3Fe-4S</keyword>
<keyword id="KW-0963">Cytoplasm</keyword>
<keyword id="KW-0240">DNA-directed RNA polymerase</keyword>
<keyword id="KW-0408">Iron</keyword>
<keyword id="KW-0411">Iron-sulfur</keyword>
<keyword id="KW-0479">Metal-binding</keyword>
<keyword id="KW-0548">Nucleotidyltransferase</keyword>
<keyword id="KW-0804">Transcription</keyword>
<keyword id="KW-0808">Transferase</keyword>
<sequence length="265" mass="30142">MSINLLHKDDKRIDLVFEGYPLEFVNAIRRAAMLYVPVMSIDDVYFIENNSPLYDEILAHRLALIPFTSEEALDTYRWPEECIDCTENCEKCYTKIYIEAEALNEPKMLYSKDIKSEDPSIVPISGDIPIVLLGANQKISLEARLRLGYGKEHAKFIPVSLAIVRYYPKVEILGNCEKGATVCPEGVFELKDGKLSVKNELACTLCEECLRYCNGLIRISSVEDKYILELESVGSLKPERILLEAGKSIIRKIEELEKKLVEVIK</sequence>
<feature type="chain" id="PRO_0000453787" description="DNA-directed RNA polymerase subunit Rpo3">
    <location>
        <begin position="1"/>
        <end position="265"/>
    </location>
</feature>
<feature type="binding site" evidence="1 2 8 9 10 11">
    <location>
        <position position="203"/>
    </location>
    <ligand>
        <name>[3Fe-4S] cluster</name>
        <dbReference type="ChEBI" id="CHEBI:21137"/>
    </ligand>
</feature>
<feature type="binding site" evidence="1 2 8 9 10 11">
    <location>
        <position position="206"/>
    </location>
    <ligand>
        <name>[3Fe-4S] cluster</name>
        <dbReference type="ChEBI" id="CHEBI:21137"/>
    </ligand>
</feature>
<feature type="binding site" evidence="1 2 8 9 10 11">
    <location>
        <position position="209"/>
    </location>
    <ligand>
        <name>[3Fe-4S] cluster</name>
        <dbReference type="ChEBI" id="CHEBI:21137"/>
    </ligand>
</feature>
<feature type="strand" evidence="14">
    <location>
        <begin position="3"/>
        <end position="8"/>
    </location>
</feature>
<feature type="strand" evidence="14">
    <location>
        <begin position="10"/>
        <end position="20"/>
    </location>
</feature>
<feature type="helix" evidence="14">
    <location>
        <begin position="22"/>
        <end position="33"/>
    </location>
</feature>
<feature type="strand" evidence="14">
    <location>
        <begin position="34"/>
        <end position="48"/>
    </location>
</feature>
<feature type="strand" evidence="14">
    <location>
        <begin position="51"/>
        <end position="53"/>
    </location>
</feature>
<feature type="helix" evidence="14">
    <location>
        <begin position="55"/>
        <end position="64"/>
    </location>
</feature>
<feature type="helix" evidence="14">
    <location>
        <begin position="72"/>
        <end position="75"/>
    </location>
</feature>
<feature type="turn" evidence="14">
    <location>
        <begin position="79"/>
        <end position="81"/>
    </location>
</feature>
<feature type="strand" evidence="14">
    <location>
        <begin position="82"/>
        <end position="84"/>
    </location>
</feature>
<feature type="strand" evidence="14">
    <location>
        <begin position="91"/>
        <end position="101"/>
    </location>
</feature>
<feature type="strand" evidence="14">
    <location>
        <begin position="108"/>
        <end position="110"/>
    </location>
</feature>
<feature type="helix" evidence="14">
    <location>
        <begin position="111"/>
        <end position="113"/>
    </location>
</feature>
<feature type="strand" evidence="14">
    <location>
        <begin position="129"/>
        <end position="132"/>
    </location>
</feature>
<feature type="strand" evidence="14">
    <location>
        <begin position="138"/>
        <end position="149"/>
    </location>
</feature>
<feature type="turn" evidence="14">
    <location>
        <begin position="150"/>
        <end position="152"/>
    </location>
</feature>
<feature type="strand" evidence="14">
    <location>
        <begin position="153"/>
        <end position="156"/>
    </location>
</feature>
<feature type="strand" evidence="14">
    <location>
        <begin position="159"/>
        <end position="168"/>
    </location>
</feature>
<feature type="strand" evidence="14">
    <location>
        <begin position="171"/>
        <end position="174"/>
    </location>
</feature>
<feature type="helix" evidence="14">
    <location>
        <begin position="177"/>
        <end position="182"/>
    </location>
</feature>
<feature type="strand" evidence="13">
    <location>
        <begin position="184"/>
        <end position="186"/>
    </location>
</feature>
<feature type="strand" evidence="14">
    <location>
        <begin position="191"/>
        <end position="194"/>
    </location>
</feature>
<feature type="helix" evidence="14">
    <location>
        <begin position="208"/>
        <end position="212"/>
    </location>
</feature>
<feature type="strand" evidence="14">
    <location>
        <begin position="213"/>
        <end position="215"/>
    </location>
</feature>
<feature type="strand" evidence="14">
    <location>
        <begin position="221"/>
        <end position="232"/>
    </location>
</feature>
<feature type="strand" evidence="14">
    <location>
        <begin position="234"/>
        <end position="236"/>
    </location>
</feature>
<feature type="helix" evidence="14">
    <location>
        <begin position="238"/>
        <end position="261"/>
    </location>
</feature>
<name>RPO3_SACSH</name>
<proteinExistence type="evidence at protein level"/>
<organism>
    <name type="scientific">Saccharolobus shibatae (strain ATCC 51178 / DSM 5389 / JCM 8931 / NBRC 15437 / B12)</name>
    <name type="common">Sulfolobus shibatae</name>
    <dbReference type="NCBI Taxonomy" id="523848"/>
    <lineage>
        <taxon>Archaea</taxon>
        <taxon>Thermoproteota</taxon>
        <taxon>Thermoprotei</taxon>
        <taxon>Sulfolobales</taxon>
        <taxon>Sulfolobaceae</taxon>
        <taxon>Saccharolobus</taxon>
    </lineage>
</organism>
<comment type="function">
    <text evidence="1">DNA-dependent RNA polymerase (RNAP) catalyzes the transcription of DNA into RNA using the four ribonucleoside triphosphates as substrates.</text>
</comment>
<comment type="catalytic activity">
    <reaction evidence="1">
        <text>RNA(n) + a ribonucleoside 5'-triphosphate = RNA(n+1) + diphosphate</text>
        <dbReference type="Rhea" id="RHEA:21248"/>
        <dbReference type="Rhea" id="RHEA-COMP:14527"/>
        <dbReference type="Rhea" id="RHEA-COMP:17342"/>
        <dbReference type="ChEBI" id="CHEBI:33019"/>
        <dbReference type="ChEBI" id="CHEBI:61557"/>
        <dbReference type="ChEBI" id="CHEBI:140395"/>
        <dbReference type="EC" id="2.7.7.6"/>
    </reaction>
</comment>
<comment type="cofactor">
    <cofactor evidence="1 2 3 4">
        <name>[3Fe-4S] cluster</name>
        <dbReference type="ChEBI" id="CHEBI:21137"/>
    </cofactor>
    <text evidence="1 2 3 4">Binds 1 [3Fe-4S] cluster.</text>
</comment>
<comment type="subunit">
    <text evidence="2 3 4">Part of the 13-subunit RNA polymerase complex.</text>
</comment>
<comment type="subcellular location">
    <subcellularLocation>
        <location evidence="1 4">Cytoplasm</location>
    </subcellularLocation>
</comment>
<comment type="similarity">
    <text evidence="1">Belongs to the archaeal Rpo3/eukaryotic RPB3 RNA polymerase subunit family.</text>
</comment>
<comment type="caution">
    <text evidence="2 3 4 6">X-ray crystallography in this and other archaea shows this protein binds a 3Fe-4S cluster, although a 4Fe-4S cluster has been suggested to be present in this protein.</text>
</comment>
<protein>
    <recommendedName>
        <fullName evidence="1 5">DNA-directed RNA polymerase subunit Rpo3</fullName>
        <ecNumber evidence="1">2.7.7.6</ecNumber>
    </recommendedName>
    <alternativeName>
        <fullName evidence="1">DNA-directed RNA polymerase subunit D</fullName>
    </alternativeName>
</protein>
<reference evidence="8 9" key="1">
    <citation type="journal article" date="2009" name="PLoS Biol.">
        <title>Evolution of complex RNA polymerases: the complete archaeal RNA polymerase structure.</title>
        <authorList>
            <person name="Korkhin Y."/>
            <person name="Unligil U.M."/>
            <person name="Littlefield O."/>
            <person name="Nelson P.J."/>
            <person name="Stuart D.I."/>
            <person name="Sigler P.B."/>
            <person name="Bell S.D."/>
            <person name="Abrescia N.G."/>
        </authorList>
    </citation>
    <scope>NUCLEOTIDE SEQUENCE [GENOMIC DNA]</scope>
    <scope>X-RAY CRYSTALLOGRAPHY (3.35 ANGSTROMS) OF THE RNA POLYMERASE COMPLEX IN COMPLEX WITH IRON-SULFUR (3FE-4S)</scope>
    <scope>COFACTOR</scope>
    <scope>SUBUNIT</scope>
    <scope>NOMENCLATURE</scope>
    <source>
        <strain>ATCC 51178 / DSM 5389 / JCM 8931 / NBRC 15437 / B12</strain>
    </source>
</reference>
<reference evidence="7" key="2">
    <citation type="journal article" date="2021" name="Environ. Microbiol.">
        <title>New insights into the diversity and evolution of the archaeal mobilome from three complete genomes of Saccharolobus shibatae.</title>
        <authorList>
            <person name="Medvedeva S."/>
            <person name="Brandt D."/>
            <person name="Cvirkaite-Krupovic V."/>
            <person name="Liu Y."/>
            <person name="Severinov K."/>
            <person name="Ishino S."/>
            <person name="Ishino Y."/>
            <person name="Prangishvili D."/>
            <person name="Kalinowski J."/>
            <person name="Krupovic M."/>
        </authorList>
    </citation>
    <scope>NUCLEOTIDE SEQUENCE [LARGE SCALE GENOMIC DNA]</scope>
    <source>
        <strain>ATCC 51178 / DSM 5389 / JCM 8931 / NBRC 15437 / B12</strain>
    </source>
</reference>
<reference evidence="10" key="3">
    <citation type="journal article" date="2011" name="Biochem. Soc. Trans.">
        <title>Archaeal RNA polymerase: the influence of the protruding stalk in crystal packing and preliminary biophysical analysis of the Rpo13 subunit.</title>
        <authorList>
            <person name="Wojtas M."/>
            <person name="Peralta B."/>
            <person name="Ondiviela M."/>
            <person name="Mogni M."/>
            <person name="Bell S.D."/>
            <person name="Abrescia N.G."/>
        </authorList>
    </citation>
    <scope>X-RAY CRYSTALLOGRAPHY (3.80 ANGSTROMS) OF THE RNA POLYMERASE COMPLEX IN COMPLEX WITH IRON-SULFUR (3FE-4S)</scope>
    <scope>COFACTOR</scope>
    <scope>SUBUNIT</scope>
    <source>
        <strain>ATCC 51178 / DSM 5389 / JCM 8931 / NBRC 15437 / B12</strain>
    </source>
</reference>
<reference evidence="11 12" key="4">
    <citation type="journal article" date="2012" name="Nucleic Acids Res.">
        <title>Structural and functional analyses of the interaction of archaeal RNA polymerase with DNA.</title>
        <authorList>
            <person name="Wojtas M.N."/>
            <person name="Mogni M."/>
            <person name="Millet O."/>
            <person name="Bell S.D."/>
            <person name="Abrescia N.G."/>
        </authorList>
    </citation>
    <scope>X-RAY CRYSTALLOGRAPHY (3.20 ANGSTROMS) OF THE RNA POLYMERASE COMPLEX IN COMPLEX WITH IRON-SULFUR (3FE-4S) WITH AND WITHOUT DNA</scope>
    <scope>COFACTOR</scope>
    <scope>SUBUNIT</scope>
    <scope>SUBCELLULAR LOCATION</scope>
    <source>
        <strain>ATCC 51178 / DSM 5389 / JCM 8931 / NBRC 15437 / B12</strain>
    </source>
</reference>
<evidence type="ECO:0000255" key="1">
    <source>
        <dbReference type="HAMAP-Rule" id="MF_00320"/>
    </source>
</evidence>
<evidence type="ECO:0000269" key="2">
    <source>
    </source>
</evidence>
<evidence type="ECO:0000269" key="3">
    <source>
    </source>
</evidence>
<evidence type="ECO:0000269" key="4">
    <source>
    </source>
</evidence>
<evidence type="ECO:0000303" key="5">
    <source>
    </source>
</evidence>
<evidence type="ECO:0000305" key="6"/>
<evidence type="ECO:0000312" key="7">
    <source>
        <dbReference type="EMBL" id="QXJ27312.1"/>
    </source>
</evidence>
<evidence type="ECO:0007744" key="8">
    <source>
        <dbReference type="PDB" id="2WAQ"/>
    </source>
</evidence>
<evidence type="ECO:0007744" key="9">
    <source>
        <dbReference type="PDB" id="2WB1"/>
    </source>
</evidence>
<evidence type="ECO:0007744" key="10">
    <source>
        <dbReference type="PDB" id="2Y0S"/>
    </source>
</evidence>
<evidence type="ECO:0007744" key="11">
    <source>
        <dbReference type="PDB" id="4AYB"/>
    </source>
</evidence>
<evidence type="ECO:0007744" key="12">
    <source>
        <dbReference type="PDB" id="4V8S"/>
    </source>
</evidence>
<evidence type="ECO:0007829" key="13">
    <source>
        <dbReference type="PDB" id="2WAQ"/>
    </source>
</evidence>
<evidence type="ECO:0007829" key="14">
    <source>
        <dbReference type="PDB" id="4AYB"/>
    </source>
</evidence>